<sequence length="490" mass="54843">MVSAAAGWAAPAFAVAAVVIWVVLCGELLRRRRRGAGSGKGDAAAAARLPPGSFGWPVVGETLEFVSCAYSPRPEAFVDKRRKLHGSAVFRSHLFGSATVVTADAEVSRFVLQSDARAFVPWYPRSLTELMGKSSILLINGALQRRVHGLVGAFFKSSHLKSQLTADMRRRLSPALSSFPDSSLLHVQHLAKSVVFEILVRGLIGLEAGEEMQQLKQQFQEFIVGLMSLPIKLPGTRLYRSLQAKKKMARLIQRIIREKRARRAAASLPRDAIDMLIGDGSDELTDELISDNMIDLMIPAEDSVPVLITLAVKFLSECPLALHQLEEENIQLKRRKTDMGETLQWTDYMSLSFTQHVITETLRLGNIIGGIMRKAVRDVEVKGHLIPKGWCVFVYFRSVHLDDTLYDEPYKFNPWRWKEKDMSNGSFTPFGGGQRLCPGLDLARLEASIFLHHLVTSFRWVAEEDHIVNFPTVRLKRGMPIRVTAKEDDD</sequence>
<accession>A2WLP4</accession>
<gene>
    <name evidence="2" type="primary">CYP90D2</name>
    <name evidence="5" type="ORF">OsI_00765</name>
</gene>
<feature type="chain" id="PRO_0000455307" description="Cytochrome P450 90D2">
    <location>
        <begin position="1"/>
        <end position="490"/>
    </location>
</feature>
<feature type="transmembrane region" description="Helical" evidence="3">
    <location>
        <begin position="4"/>
        <end position="24"/>
    </location>
</feature>
<feature type="binding site" description="axial binding residue" evidence="1">
    <location>
        <position position="437"/>
    </location>
    <ligand>
        <name>heme</name>
        <dbReference type="ChEBI" id="CHEBI:30413"/>
    </ligand>
    <ligandPart>
        <name>Fe</name>
        <dbReference type="ChEBI" id="CHEBI:18248"/>
    </ligandPart>
</feature>
<evidence type="ECO:0000250" key="1">
    <source>
        <dbReference type="UniProtKB" id="P04798"/>
    </source>
</evidence>
<evidence type="ECO:0000250" key="2">
    <source>
        <dbReference type="UniProtKB" id="Q94IW5"/>
    </source>
</evidence>
<evidence type="ECO:0000255" key="3"/>
<evidence type="ECO:0000305" key="4"/>
<evidence type="ECO:0000312" key="5">
    <source>
        <dbReference type="EMBL" id="EAY72890.1"/>
    </source>
</evidence>
<organism>
    <name type="scientific">Oryza sativa subsp. indica</name>
    <name type="common">Rice</name>
    <dbReference type="NCBI Taxonomy" id="39946"/>
    <lineage>
        <taxon>Eukaryota</taxon>
        <taxon>Viridiplantae</taxon>
        <taxon>Streptophyta</taxon>
        <taxon>Embryophyta</taxon>
        <taxon>Tracheophyta</taxon>
        <taxon>Spermatophyta</taxon>
        <taxon>Magnoliopsida</taxon>
        <taxon>Liliopsida</taxon>
        <taxon>Poales</taxon>
        <taxon>Poaceae</taxon>
        <taxon>BOP clade</taxon>
        <taxon>Oryzoideae</taxon>
        <taxon>Oryzeae</taxon>
        <taxon>Oryzinae</taxon>
        <taxon>Oryza</taxon>
        <taxon>Oryza sativa</taxon>
    </lineage>
</organism>
<keyword id="KW-0349">Heme</keyword>
<keyword id="KW-0408">Iron</keyword>
<keyword id="KW-0472">Membrane</keyword>
<keyword id="KW-0479">Metal-binding</keyword>
<keyword id="KW-0503">Monooxygenase</keyword>
<keyword id="KW-0560">Oxidoreductase</keyword>
<keyword id="KW-1185">Reference proteome</keyword>
<keyword id="KW-0812">Transmembrane</keyword>
<keyword id="KW-1133">Transmembrane helix</keyword>
<protein>
    <recommendedName>
        <fullName evidence="2">Cytochrome P450 90D2</fullName>
        <shortName evidence="2">OsCYP90D2</shortName>
    </recommendedName>
    <alternativeName>
        <fullName evidence="2">3-dehydro-6-deoxoteasterone synthase</fullName>
        <ecNumber evidence="2">1.14.14.-</ecNumber>
    </alternativeName>
    <alternativeName>
        <fullName evidence="2">3-dehydroteasterone synthase</fullName>
        <ecNumber evidence="2">1.14.14.-</ecNumber>
    </alternativeName>
</protein>
<dbReference type="EC" id="1.14.14.-" evidence="2"/>
<dbReference type="EMBL" id="CM000126">
    <property type="protein sequence ID" value="EAY72890.1"/>
    <property type="molecule type" value="Genomic_DNA"/>
</dbReference>
<dbReference type="SMR" id="A2WLP4"/>
<dbReference type="STRING" id="39946.A2WLP4"/>
<dbReference type="EnsemblPlants" id="BGIOSGA002945-TA">
    <property type="protein sequence ID" value="BGIOSGA002945-PA"/>
    <property type="gene ID" value="BGIOSGA002945"/>
</dbReference>
<dbReference type="EnsemblPlants" id="OsIR64_01g0006770.01">
    <property type="protein sequence ID" value="OsIR64_01g0006770.01"/>
    <property type="gene ID" value="OsIR64_01g0006770"/>
</dbReference>
<dbReference type="EnsemblPlants" id="OsKYG_01g0006760.01">
    <property type="protein sequence ID" value="OsKYG_01g0006760.01"/>
    <property type="gene ID" value="OsKYG_01g0006760"/>
</dbReference>
<dbReference type="EnsemblPlants" id="OsLaMu_01g0006720.01">
    <property type="protein sequence ID" value="OsLaMu_01g0006720.01"/>
    <property type="gene ID" value="OsLaMu_01g0006720"/>
</dbReference>
<dbReference type="EnsemblPlants" id="OsLima_01g0006580.01">
    <property type="protein sequence ID" value="OsLima_01g0006580.01"/>
    <property type="gene ID" value="OsLima_01g0006580"/>
</dbReference>
<dbReference type="EnsemblPlants" id="OsMH63_01G006980_02">
    <property type="protein sequence ID" value="OsMH63_01G006980_02"/>
    <property type="gene ID" value="OsMH63_01G006980"/>
</dbReference>
<dbReference type="EnsemblPlants" id="OsMH63_01G006980_03">
    <property type="protein sequence ID" value="OsMH63_01G006980_03"/>
    <property type="gene ID" value="OsMH63_01G006980"/>
</dbReference>
<dbReference type="EnsemblPlants" id="OsPr106_01g0006800.01">
    <property type="protein sequence ID" value="OsPr106_01g0006800.01"/>
    <property type="gene ID" value="OsPr106_01g0006800"/>
</dbReference>
<dbReference type="Gramene" id="BGIOSGA002945-TA">
    <property type="protein sequence ID" value="BGIOSGA002945-PA"/>
    <property type="gene ID" value="BGIOSGA002945"/>
</dbReference>
<dbReference type="Gramene" id="OsIR64_01g0006770.01">
    <property type="protein sequence ID" value="OsIR64_01g0006770.01"/>
    <property type="gene ID" value="OsIR64_01g0006770"/>
</dbReference>
<dbReference type="Gramene" id="OsKYG_01g0006760.01">
    <property type="protein sequence ID" value="OsKYG_01g0006760.01"/>
    <property type="gene ID" value="OsKYG_01g0006760"/>
</dbReference>
<dbReference type="Gramene" id="OsLaMu_01g0006720.01">
    <property type="protein sequence ID" value="OsLaMu_01g0006720.01"/>
    <property type="gene ID" value="OsLaMu_01g0006720"/>
</dbReference>
<dbReference type="Gramene" id="OsLima_01g0006580.01">
    <property type="protein sequence ID" value="OsLima_01g0006580.01"/>
    <property type="gene ID" value="OsLima_01g0006580"/>
</dbReference>
<dbReference type="Gramene" id="OsMH63_01G006980_02">
    <property type="protein sequence ID" value="OsMH63_01G006980_02"/>
    <property type="gene ID" value="OsMH63_01G006980"/>
</dbReference>
<dbReference type="Gramene" id="OsMH63_01G006980_03">
    <property type="protein sequence ID" value="OsMH63_01G006980_03"/>
    <property type="gene ID" value="OsMH63_01G006980"/>
</dbReference>
<dbReference type="Gramene" id="OsPr106_01g0006800.01">
    <property type="protein sequence ID" value="OsPr106_01g0006800.01"/>
    <property type="gene ID" value="OsPr106_01g0006800"/>
</dbReference>
<dbReference type="HOGENOM" id="CLU_001570_15_5_1"/>
<dbReference type="OMA" id="MKRRMPV"/>
<dbReference type="UniPathway" id="UPA00381"/>
<dbReference type="Proteomes" id="UP000007015">
    <property type="component" value="Chromosome 1"/>
</dbReference>
<dbReference type="GO" id="GO:0016020">
    <property type="term" value="C:membrane"/>
    <property type="evidence" value="ECO:0007669"/>
    <property type="project" value="UniProtKB-SubCell"/>
</dbReference>
<dbReference type="GO" id="GO:0020037">
    <property type="term" value="F:heme binding"/>
    <property type="evidence" value="ECO:0007669"/>
    <property type="project" value="InterPro"/>
</dbReference>
<dbReference type="GO" id="GO:0005506">
    <property type="term" value="F:iron ion binding"/>
    <property type="evidence" value="ECO:0007669"/>
    <property type="project" value="InterPro"/>
</dbReference>
<dbReference type="GO" id="GO:0016709">
    <property type="term" value="F:oxidoreductase activity, acting on paired donors, with incorporation or reduction of molecular oxygen, NAD(P)H as one donor, and incorporation of one atom of oxygen"/>
    <property type="evidence" value="ECO:0007669"/>
    <property type="project" value="TreeGrafter"/>
</dbReference>
<dbReference type="GO" id="GO:0016132">
    <property type="term" value="P:brassinosteroid biosynthetic process"/>
    <property type="evidence" value="ECO:0007669"/>
    <property type="project" value="UniProtKB-UniPathway"/>
</dbReference>
<dbReference type="GO" id="GO:0010268">
    <property type="term" value="P:brassinosteroid homeostasis"/>
    <property type="evidence" value="ECO:0007669"/>
    <property type="project" value="TreeGrafter"/>
</dbReference>
<dbReference type="GO" id="GO:0016125">
    <property type="term" value="P:sterol metabolic process"/>
    <property type="evidence" value="ECO:0007669"/>
    <property type="project" value="TreeGrafter"/>
</dbReference>
<dbReference type="CDD" id="cd11043">
    <property type="entry name" value="CYP90-like"/>
    <property type="match status" value="1"/>
</dbReference>
<dbReference type="FunFam" id="1.10.630.10:FF:000048">
    <property type="entry name" value="3-epi-6-deoxocathasterone 23-monooxygenase CYP90D1"/>
    <property type="match status" value="1"/>
</dbReference>
<dbReference type="Gene3D" id="1.10.630.10">
    <property type="entry name" value="Cytochrome P450"/>
    <property type="match status" value="1"/>
</dbReference>
<dbReference type="InterPro" id="IPR001128">
    <property type="entry name" value="Cyt_P450"/>
</dbReference>
<dbReference type="InterPro" id="IPR017972">
    <property type="entry name" value="Cyt_P450_CS"/>
</dbReference>
<dbReference type="InterPro" id="IPR002401">
    <property type="entry name" value="Cyt_P450_E_grp-I"/>
</dbReference>
<dbReference type="InterPro" id="IPR036396">
    <property type="entry name" value="Cyt_P450_sf"/>
</dbReference>
<dbReference type="PANTHER" id="PTHR24286:SF30">
    <property type="entry name" value="3-EPI-6-DEOXOCATHASTERONE 23-MONOOXYGENASE CYP90D1"/>
    <property type="match status" value="1"/>
</dbReference>
<dbReference type="PANTHER" id="PTHR24286">
    <property type="entry name" value="CYTOCHROME P450 26"/>
    <property type="match status" value="1"/>
</dbReference>
<dbReference type="Pfam" id="PF00067">
    <property type="entry name" value="p450"/>
    <property type="match status" value="1"/>
</dbReference>
<dbReference type="PRINTS" id="PR00463">
    <property type="entry name" value="EP450I"/>
</dbReference>
<dbReference type="SUPFAM" id="SSF48264">
    <property type="entry name" value="Cytochrome P450"/>
    <property type="match status" value="1"/>
</dbReference>
<dbReference type="PROSITE" id="PS00086">
    <property type="entry name" value="CYTOCHROME_P450"/>
    <property type="match status" value="1"/>
</dbReference>
<proteinExistence type="inferred from homology"/>
<name>C90D2_ORYSI</name>
<reference key="1">
    <citation type="journal article" date="2005" name="PLoS Biol.">
        <title>The genomes of Oryza sativa: a history of duplications.</title>
        <authorList>
            <person name="Yu J."/>
            <person name="Wang J."/>
            <person name="Lin W."/>
            <person name="Li S."/>
            <person name="Li H."/>
            <person name="Zhou J."/>
            <person name="Ni P."/>
            <person name="Dong W."/>
            <person name="Hu S."/>
            <person name="Zeng C."/>
            <person name="Zhang J."/>
            <person name="Zhang Y."/>
            <person name="Li R."/>
            <person name="Xu Z."/>
            <person name="Li S."/>
            <person name="Li X."/>
            <person name="Zheng H."/>
            <person name="Cong L."/>
            <person name="Lin L."/>
            <person name="Yin J."/>
            <person name="Geng J."/>
            <person name="Li G."/>
            <person name="Shi J."/>
            <person name="Liu J."/>
            <person name="Lv H."/>
            <person name="Li J."/>
            <person name="Wang J."/>
            <person name="Deng Y."/>
            <person name="Ran L."/>
            <person name="Shi X."/>
            <person name="Wang X."/>
            <person name="Wu Q."/>
            <person name="Li C."/>
            <person name="Ren X."/>
            <person name="Wang J."/>
            <person name="Wang X."/>
            <person name="Li D."/>
            <person name="Liu D."/>
            <person name="Zhang X."/>
            <person name="Ji Z."/>
            <person name="Zhao W."/>
            <person name="Sun Y."/>
            <person name="Zhang Z."/>
            <person name="Bao J."/>
            <person name="Han Y."/>
            <person name="Dong L."/>
            <person name="Ji J."/>
            <person name="Chen P."/>
            <person name="Wu S."/>
            <person name="Liu J."/>
            <person name="Xiao Y."/>
            <person name="Bu D."/>
            <person name="Tan J."/>
            <person name="Yang L."/>
            <person name="Ye C."/>
            <person name="Zhang J."/>
            <person name="Xu J."/>
            <person name="Zhou Y."/>
            <person name="Yu Y."/>
            <person name="Zhang B."/>
            <person name="Zhuang S."/>
            <person name="Wei H."/>
            <person name="Liu B."/>
            <person name="Lei M."/>
            <person name="Yu H."/>
            <person name="Li Y."/>
            <person name="Xu H."/>
            <person name="Wei S."/>
            <person name="He X."/>
            <person name="Fang L."/>
            <person name="Zhang Z."/>
            <person name="Zhang Y."/>
            <person name="Huang X."/>
            <person name="Su Z."/>
            <person name="Tong W."/>
            <person name="Li J."/>
            <person name="Tong Z."/>
            <person name="Li S."/>
            <person name="Ye J."/>
            <person name="Wang L."/>
            <person name="Fang L."/>
            <person name="Lei T."/>
            <person name="Chen C.-S."/>
            <person name="Chen H.-C."/>
            <person name="Xu Z."/>
            <person name="Li H."/>
            <person name="Huang H."/>
            <person name="Zhang F."/>
            <person name="Xu H."/>
            <person name="Li N."/>
            <person name="Zhao C."/>
            <person name="Li S."/>
            <person name="Dong L."/>
            <person name="Huang Y."/>
            <person name="Li L."/>
            <person name="Xi Y."/>
            <person name="Qi Q."/>
            <person name="Li W."/>
            <person name="Zhang B."/>
            <person name="Hu W."/>
            <person name="Zhang Y."/>
            <person name="Tian X."/>
            <person name="Jiao Y."/>
            <person name="Liang X."/>
            <person name="Jin J."/>
            <person name="Gao L."/>
            <person name="Zheng W."/>
            <person name="Hao B."/>
            <person name="Liu S.-M."/>
            <person name="Wang W."/>
            <person name="Yuan L."/>
            <person name="Cao M."/>
            <person name="McDermott J."/>
            <person name="Samudrala R."/>
            <person name="Wang J."/>
            <person name="Wong G.K.-S."/>
            <person name="Yang H."/>
        </authorList>
    </citation>
    <scope>NUCLEOTIDE SEQUENCE [LARGE SCALE GENOMIC DNA]</scope>
    <source>
        <strain>cv. 93-11</strain>
    </source>
</reference>
<comment type="function">
    <text evidence="2">Catalyzes the C6-oxidation step in brassinosteroids biosynthesis (By similarity). May convert 6-deoxoteasterone (6-deoxoTE) to 3-dehydro-6-deoxoteasterone (6-deoxo3DT, 6-deoxo3DHT), and teasterone (TE) to 3-dehydroteasterone (3DT, 3-DHT) (By similarity). Involved in the elongation of leaf sheaths and stems (By similarity).</text>
</comment>
<comment type="catalytic activity">
    <reaction evidence="2">
        <text>6-deoxoteasterone + reduced [NADPH--hemoprotein reductase] + O2 = 3-dehydro-6-deoxoteasterone + oxidized [NADPH--hemoprotein reductase] + 2 H2O + H(+)</text>
        <dbReference type="Rhea" id="RHEA:69983"/>
        <dbReference type="Rhea" id="RHEA-COMP:11964"/>
        <dbReference type="Rhea" id="RHEA-COMP:11965"/>
        <dbReference type="ChEBI" id="CHEBI:15377"/>
        <dbReference type="ChEBI" id="CHEBI:15378"/>
        <dbReference type="ChEBI" id="CHEBI:15379"/>
        <dbReference type="ChEBI" id="CHEBI:20710"/>
        <dbReference type="ChEBI" id="CHEBI:20716"/>
        <dbReference type="ChEBI" id="CHEBI:57618"/>
        <dbReference type="ChEBI" id="CHEBI:58210"/>
    </reaction>
    <physiologicalReaction direction="left-to-right" evidence="2">
        <dbReference type="Rhea" id="RHEA:69984"/>
    </physiologicalReaction>
</comment>
<comment type="cofactor">
    <cofactor evidence="1">
        <name>heme</name>
        <dbReference type="ChEBI" id="CHEBI:30413"/>
    </cofactor>
</comment>
<comment type="pathway">
    <text evidence="2">Plant hormone biosynthesis; brassinosteroid biosynthesis.</text>
</comment>
<comment type="subcellular location">
    <subcellularLocation>
        <location evidence="3">Membrane</location>
        <topology evidence="3">Single-pass membrane protein</topology>
    </subcellularLocation>
</comment>
<comment type="similarity">
    <text evidence="4">Belongs to the cytochrome P450 family.</text>
</comment>